<reference key="1">
    <citation type="journal article" date="1989" name="J. Bacteriol.">
        <title>Expressed genes for plant-type ribulose 1,5-bisphosphate carboxylase/oxygenase in the photosynthetic bacterium Chromatium vinosum, which possesses two complete sets of the genes.</title>
        <authorList>
            <person name="Viale A.M."/>
            <person name="Kobayashi H."/>
            <person name="Akazawa T."/>
        </authorList>
    </citation>
    <scope>NUCLEOTIDE SEQUENCE [GENOMIC DNA]</scope>
</reference>
<reference key="2">
    <citation type="journal article" date="1995" name="Gene">
        <title>Genes encoding RubisCO in Pseudomonas hydrogenothermophila are followed by a novel cbbQ gene similar to nirQ of the denitrification gene cluster from Pseudomonas species.</title>
        <authorList>
            <person name="Yokoyama K."/>
            <person name="Hayashi N.R."/>
            <person name="Arai H."/>
            <person name="Chung S.Y."/>
            <person name="Igarashi Y."/>
            <person name="Kodama T."/>
        </authorList>
    </citation>
    <scope>IDENTIFICATION</scope>
</reference>
<keyword id="KW-0067">ATP-binding</keyword>
<keyword id="KW-0547">Nucleotide-binding</keyword>
<dbReference type="EMBL" id="M26396">
    <property type="status" value="NOT_ANNOTATED_CDS"/>
    <property type="molecule type" value="Genomic_DNA"/>
</dbReference>
<dbReference type="SMR" id="P56540"/>
<dbReference type="GO" id="GO:0005524">
    <property type="term" value="F:ATP binding"/>
    <property type="evidence" value="ECO:0007669"/>
    <property type="project" value="UniProtKB-KW"/>
</dbReference>
<dbReference type="GO" id="GO:0016887">
    <property type="term" value="F:ATP hydrolysis activity"/>
    <property type="evidence" value="ECO:0007669"/>
    <property type="project" value="InterPro"/>
</dbReference>
<dbReference type="Gene3D" id="3.40.50.300">
    <property type="entry name" value="P-loop containing nucleotide triphosphate hydrolases"/>
    <property type="match status" value="1"/>
</dbReference>
<dbReference type="InterPro" id="IPR011704">
    <property type="entry name" value="ATPase_dyneun-rel_AAA"/>
</dbReference>
<dbReference type="InterPro" id="IPR027417">
    <property type="entry name" value="P-loop_NTPase"/>
</dbReference>
<dbReference type="Pfam" id="PF07728">
    <property type="entry name" value="AAA_5"/>
    <property type="match status" value="1"/>
</dbReference>
<dbReference type="SUPFAM" id="SSF52540">
    <property type="entry name" value="P-loop containing nucleoside triphosphate hydrolases"/>
    <property type="match status" value="1"/>
</dbReference>
<proteinExistence type="inferred from homology"/>
<organism>
    <name type="scientific">Allochromatium vinosum</name>
    <name type="common">Chromatium vinosum</name>
    <dbReference type="NCBI Taxonomy" id="1049"/>
    <lineage>
        <taxon>Bacteria</taxon>
        <taxon>Pseudomonadati</taxon>
        <taxon>Pseudomonadota</taxon>
        <taxon>Gammaproteobacteria</taxon>
        <taxon>Chromatiales</taxon>
        <taxon>Chromatiaceae</taxon>
        <taxon>Allochromatium</taxon>
    </lineage>
</organism>
<accession>P56540</accession>
<name>CBBQ_ALLVI</name>
<evidence type="ECO:0000255" key="1"/>
<evidence type="ECO:0000305" key="2"/>
<feature type="chain" id="PRO_0000219562" description="Protein CbbQ">
    <location>
        <begin position="1"/>
        <end position="74" status="greater than"/>
    </location>
</feature>
<feature type="binding site" evidence="1">
    <location>
        <begin position="41"/>
        <end position="48"/>
    </location>
    <ligand>
        <name>ATP</name>
        <dbReference type="ChEBI" id="CHEBI:30616"/>
    </ligand>
</feature>
<feature type="non-terminal residue">
    <location>
        <position position="74"/>
    </location>
</feature>
<gene>
    <name type="primary">cbbQ</name>
</gene>
<sequence length="74" mass="8377">MSDIDRNQFLIDHEPYYRPVSNEVALYEAAYAARMPVMLKGPTGCGKTRFVEYMAWKLGKPLITVACNEDMTAS</sequence>
<protein>
    <recommendedName>
        <fullName>Protein CbbQ</fullName>
    </recommendedName>
</protein>
<comment type="function">
    <text>May affect the post-translational activation and/or assembly of the oligomeric structure of RuBisCO.</text>
</comment>
<comment type="similarity">
    <text evidence="2">Belongs to the CbbQ/NirQ/NorQ/GpvN family.</text>
</comment>